<accession>O89090</accession>
<accession>O89087</accession>
<accession>Q62251</accession>
<accession>Q64167</accession>
<organism>
    <name type="scientific">Mus musculus</name>
    <name type="common">Mouse</name>
    <dbReference type="NCBI Taxonomy" id="10090"/>
    <lineage>
        <taxon>Eukaryota</taxon>
        <taxon>Metazoa</taxon>
        <taxon>Chordata</taxon>
        <taxon>Craniata</taxon>
        <taxon>Vertebrata</taxon>
        <taxon>Euteleostomi</taxon>
        <taxon>Mammalia</taxon>
        <taxon>Eutheria</taxon>
        <taxon>Euarchontoglires</taxon>
        <taxon>Glires</taxon>
        <taxon>Rodentia</taxon>
        <taxon>Myomorpha</taxon>
        <taxon>Muroidea</taxon>
        <taxon>Muridae</taxon>
        <taxon>Murinae</taxon>
        <taxon>Mus</taxon>
        <taxon>Mus</taxon>
    </lineage>
</organism>
<protein>
    <recommendedName>
        <fullName>Transcription factor Sp1</fullName>
    </recommendedName>
    <alternativeName>
        <fullName evidence="11">Specificity protein 1</fullName>
    </alternativeName>
</protein>
<proteinExistence type="evidence at protein level"/>
<keyword id="KW-0007">Acetylation</keyword>
<keyword id="KW-0010">Activator</keyword>
<keyword id="KW-0025">Alternative splicing</keyword>
<keyword id="KW-0090">Biological rhythms</keyword>
<keyword id="KW-0963">Cytoplasm</keyword>
<keyword id="KW-0238">DNA-binding</keyword>
<keyword id="KW-0325">Glycoprotein</keyword>
<keyword id="KW-0945">Host-virus interaction</keyword>
<keyword id="KW-1017">Isopeptide bond</keyword>
<keyword id="KW-0479">Metal-binding</keyword>
<keyword id="KW-0539">Nucleus</keyword>
<keyword id="KW-0597">Phosphoprotein</keyword>
<keyword id="KW-1185">Reference proteome</keyword>
<keyword id="KW-0677">Repeat</keyword>
<keyword id="KW-0678">Repressor</keyword>
<keyword id="KW-0804">Transcription</keyword>
<keyword id="KW-0805">Transcription regulation</keyword>
<keyword id="KW-0832">Ubl conjugation</keyword>
<keyword id="KW-0862">Zinc</keyword>
<keyword id="KW-0863">Zinc-finger</keyword>
<gene>
    <name type="primary">Sp1</name>
</gene>
<name>SP1_MOUSE</name>
<reference key="1">
    <citation type="journal article" date="1998" name="DNA Cell Biol.">
        <title>Sp family transcription factors regulate expression of rat D2 dopamine receptor gene.</title>
        <authorList>
            <person name="Yajima S."/>
            <person name="Lee S.H."/>
            <person name="Minowa T."/>
            <person name="Mouradian M.M."/>
        </authorList>
    </citation>
    <scope>NUCLEOTIDE SEQUENCE [MRNA] (ISOFORM 1)</scope>
    <source>
        <tissue>Neuroblastoma</tissue>
    </source>
</reference>
<reference key="2">
    <citation type="journal article" date="1995" name="Proc. Natl. Acad. Sci. U.S.A.">
        <title>An alternatively spliced form of the transcription factor Sp1 containing only a single glutamine-rich transactivation domain.</title>
        <authorList>
            <person name="Persengiev S.P."/>
            <person name="Saffer J.D."/>
            <person name="Kilpatrick D.L."/>
        </authorList>
    </citation>
    <scope>NUCLEOTIDE SEQUENCE [MRNA] (ISOFORM 2)</scope>
</reference>
<reference key="3">
    <citation type="submission" date="1997-09" db="EMBL/GenBank/DDBJ databases">
        <title>Isolation of cDNA encoding transcription factor sp1 containing two glutamine-rich transactivation domain.</title>
        <authorList>
            <person name="Park E.J."/>
            <person name="Kim J.H."/>
            <person name="Kim C.G."/>
            <person name="Park S.D."/>
            <person name="Hong S.S."/>
        </authorList>
    </citation>
    <scope>NUCLEOTIDE SEQUENCE [MRNA] (ISOFORM 1)</scope>
    <source>
        <tissue>Thymus</tissue>
    </source>
</reference>
<reference key="4">
    <citation type="journal article" date="1992" name="DNA Seq.">
        <title>Difference in the genomic organizations of the related transcription factors Sp1 and Krox-20; possible evolutionary significance.</title>
        <authorList>
            <person name="Chestier A."/>
            <person name="Charnay P."/>
        </authorList>
    </citation>
    <scope>NUCLEOTIDE SEQUENCE [GENOMIC DNA] OF 684-784</scope>
</reference>
<reference key="5">
    <citation type="journal article" date="1995" name="Mol. Cell. Biol.">
        <title>Transcriptional activation by the parvoviral nonstructural protein NS-1 is mediated via a direct interaction with Sp1.</title>
        <authorList>
            <person name="Krady J.K."/>
            <person name="Ward D.C."/>
        </authorList>
    </citation>
    <scope>INTERACTION WITH MURINE MINUTE VIRUS NS1</scope>
</reference>
<reference key="6">
    <citation type="journal article" date="1998" name="Virology">
        <title>An Sp1-binding site and TATA element are sufficient to support full transactivation by proximally bound NS1 protein of minute virus of mice.</title>
        <authorList>
            <person name="Lorson C."/>
            <person name="Pearson J."/>
            <person name="Burger L."/>
            <person name="Pintel D.J."/>
        </authorList>
    </citation>
    <scope>INTERACTION WITH MURINE MINUTE VIRUS NS1</scope>
</reference>
<reference key="7">
    <citation type="journal article" date="1999" name="Biochem. J.">
        <title>Transcriptional autorepression of Msx1 gene is mediated by interactions of Msx1 protein with a multi-protein transcriptional complex containing TATA-binding protein, Sp1 and cAMP-response-element-binding protein-binding protein (CBP/p300).</title>
        <authorList>
            <person name="Shetty S."/>
            <person name="Takahashi T."/>
            <person name="Matsui H."/>
            <person name="Ayengar R."/>
            <person name="Raghow R."/>
        </authorList>
    </citation>
    <scope>INTERACTION WITH MSX1 AND MSX3</scope>
</reference>
<reference key="8">
    <citation type="journal article" date="2007" name="Proc. Natl. Acad. Sci. U.S.A.">
        <title>Large-scale phosphorylation analysis of mouse liver.</title>
        <authorList>
            <person name="Villen J."/>
            <person name="Beausoleil S.A."/>
            <person name="Gerber S.A."/>
            <person name="Gygi S.P."/>
        </authorList>
    </citation>
    <scope>ACETYLATION [LARGE SCALE ANALYSIS] AT SER-2</scope>
    <scope>CLEAVAGE OF INITIATOR METHIONINE [LARGE SCALE ANALYSIS]</scope>
    <scope>IDENTIFICATION BY MASS SPECTROMETRY [LARGE SCALE ANALYSIS]</scope>
    <source>
        <tissue>Liver</tissue>
    </source>
</reference>
<reference key="9">
    <citation type="journal article" date="2010" name="Cell">
        <title>A tissue-specific atlas of mouse protein phosphorylation and expression.</title>
        <authorList>
            <person name="Huttlin E.L."/>
            <person name="Jedrychowski M.P."/>
            <person name="Elias J.E."/>
            <person name="Goswami T."/>
            <person name="Rad R."/>
            <person name="Beausoleil S.A."/>
            <person name="Villen J."/>
            <person name="Haas W."/>
            <person name="Sowa M.E."/>
            <person name="Gygi S.P."/>
        </authorList>
    </citation>
    <scope>PHOSPHORYLATION [LARGE SCALE ANALYSIS] AT SER-61</scope>
    <scope>IDENTIFICATION BY MASS SPECTROMETRY [LARGE SCALE ANALYSIS]</scope>
    <source>
        <tissue>Heart</tissue>
        <tissue>Kidney</tissue>
        <tissue>Liver</tissue>
        <tissue>Lung</tissue>
        <tissue>Pancreas</tissue>
        <tissue>Spleen</tissue>
        <tissue>Testis</tissue>
    </source>
</reference>
<reference key="10">
    <citation type="journal article" date="2013" name="J. Biol. Chem.">
        <title>Transcription factor NF-Y is a functional regulator of the transcription of core clock gene Bmal1.</title>
        <authorList>
            <person name="Xiao J."/>
            <person name="Zhou Y."/>
            <person name="Lai H."/>
            <person name="Lei S."/>
            <person name="Chi L.H."/>
            <person name="Mo X."/>
        </authorList>
    </citation>
    <scope>FUNCTION</scope>
</reference>
<reference key="11">
    <citation type="journal article" date="2017" name="Redox Biol.">
        <title>Specificity protein 1-zinc finger protein 179 pathway is involved in the attenuation of oxidative stress following brain injury.</title>
        <authorList>
            <person name="Chuang J.Y."/>
            <person name="Kao T.J."/>
            <person name="Lin S.H."/>
            <person name="Wu A.C."/>
            <person name="Lee P.T."/>
            <person name="Su T.P."/>
            <person name="Yeh S.H."/>
            <person name="Lee Y.C."/>
            <person name="Wu C.C."/>
            <person name="Chang W.C."/>
        </authorList>
    </citation>
    <scope>FUNCTION</scope>
    <scope>INTERACTION WITH RNF112</scope>
    <scope>INDUCTION</scope>
    <scope>SUBCELLULAR LOCATION</scope>
</reference>
<feature type="initiator methionine" description="Removed" evidence="14">
    <location>
        <position position="1"/>
    </location>
</feature>
<feature type="chain" id="PRO_0000047138" description="Transcription factor Sp1">
    <location>
        <begin position="2"/>
        <end position="784"/>
    </location>
</feature>
<feature type="zinc finger region" description="C2H2-type 1" evidence="4">
    <location>
        <begin position="627"/>
        <end position="656"/>
    </location>
</feature>
<feature type="zinc finger region" description="C2H2-type 2" evidence="4">
    <location>
        <begin position="657"/>
        <end position="686"/>
    </location>
</feature>
<feature type="zinc finger region" description="C2H2-type 3" evidence="4">
    <location>
        <begin position="687"/>
        <end position="714"/>
    </location>
</feature>
<feature type="region of interest" description="Disordered" evidence="5">
    <location>
        <begin position="1"/>
        <end position="95"/>
    </location>
</feature>
<feature type="region of interest" description="Repressor domain" evidence="1">
    <location>
        <begin position="2"/>
        <end position="84"/>
    </location>
</feature>
<feature type="region of interest" description="Disordered" evidence="5">
    <location>
        <begin position="111"/>
        <end position="144"/>
    </location>
</feature>
<feature type="region of interest" description="Transactivation domain A (Gln-rich)" evidence="1">
    <location>
        <begin position="148"/>
        <end position="253"/>
    </location>
</feature>
<feature type="region of interest" description="Transactivation domain B (Gln-rich)" evidence="1">
    <location>
        <begin position="263"/>
        <end position="497"/>
    </location>
</feature>
<feature type="region of interest" description="Disordered" evidence="5">
    <location>
        <begin position="282"/>
        <end position="303"/>
    </location>
</feature>
<feature type="region of interest" description="Disordered" evidence="5">
    <location>
        <begin position="333"/>
        <end position="398"/>
    </location>
</feature>
<feature type="region of interest" description="Transactivation domain C (highly charged)" evidence="1">
    <location>
        <begin position="498"/>
        <end position="611"/>
    </location>
</feature>
<feature type="region of interest" description="Disordered" evidence="5">
    <location>
        <begin position="566"/>
        <end position="598"/>
    </location>
</feature>
<feature type="region of interest" description="VZV IE62-binding" evidence="1">
    <location>
        <begin position="620"/>
        <end position="784"/>
    </location>
</feature>
<feature type="region of interest" description="Domain D" evidence="1">
    <location>
        <begin position="709"/>
        <end position="784"/>
    </location>
</feature>
<feature type="short sequence motif" description="9aaTAD" evidence="2">
    <location>
        <begin position="464"/>
        <end position="472"/>
    </location>
</feature>
<feature type="compositionally biased region" description="Gly residues" evidence="5">
    <location>
        <begin position="23"/>
        <end position="34"/>
    </location>
</feature>
<feature type="compositionally biased region" description="Low complexity" evidence="5">
    <location>
        <begin position="37"/>
        <end position="49"/>
    </location>
</feature>
<feature type="compositionally biased region" description="Low complexity" evidence="5">
    <location>
        <begin position="74"/>
        <end position="87"/>
    </location>
</feature>
<feature type="compositionally biased region" description="Polar residues" evidence="5">
    <location>
        <begin position="111"/>
        <end position="125"/>
    </location>
</feature>
<feature type="compositionally biased region" description="Low complexity" evidence="5">
    <location>
        <begin position="126"/>
        <end position="138"/>
    </location>
</feature>
<feature type="compositionally biased region" description="Low complexity" evidence="5">
    <location>
        <begin position="344"/>
        <end position="357"/>
    </location>
</feature>
<feature type="compositionally biased region" description="Low complexity" evidence="5">
    <location>
        <begin position="373"/>
        <end position="398"/>
    </location>
</feature>
<feature type="site" description="Cleavage" evidence="1">
    <location>
        <begin position="65"/>
        <end position="66"/>
    </location>
</feature>
<feature type="modified residue" description="N-acetylserine" evidence="14">
    <location>
        <position position="2"/>
    </location>
</feature>
<feature type="modified residue" description="Phosphoserine" evidence="2">
    <location>
        <position position="2"/>
    </location>
</feature>
<feature type="modified residue" description="Phosphoserine" evidence="2">
    <location>
        <position position="7"/>
    </location>
</feature>
<feature type="modified residue" description="Phosphoserine" evidence="15">
    <location>
        <position position="61"/>
    </location>
</feature>
<feature type="modified residue" description="Phosphoserine; by ATM" evidence="2">
    <location>
        <position position="103"/>
    </location>
</feature>
<feature type="modified residue" description="Phosphothreonine; by MAPK8" evidence="2">
    <location>
        <position position="280"/>
    </location>
</feature>
<feature type="modified residue" description="Phosphothreonine; by MAPK1 and MAPK3" evidence="2">
    <location>
        <position position="455"/>
    </location>
</feature>
<feature type="modified residue" description="Phosphoserine; alternate" evidence="2">
    <location>
        <position position="613"/>
    </location>
</feature>
<feature type="modified residue" description="Phosphothreonine; alternate" evidence="2">
    <location>
        <position position="641"/>
    </location>
</feature>
<feature type="modified residue" description="Phosphoserine; by PKC/PRKCZ; alternate" evidence="2">
    <location>
        <position position="642"/>
    </location>
</feature>
<feature type="modified residue" description="Phosphothreonine; by PKC/PRKCZ" evidence="2">
    <location>
        <position position="652"/>
    </location>
</feature>
<feature type="modified residue" description="Phosphothreonine" evidence="2">
    <location>
        <position position="669"/>
    </location>
</feature>
<feature type="modified residue" description="Phosphoserine; by PKC/PRKCZ" evidence="2">
    <location>
        <position position="671"/>
    </location>
</feature>
<feature type="modified residue" description="Phosphothreonine; by PKC/PRKCZ" evidence="2">
    <location>
        <position position="682"/>
    </location>
</feature>
<feature type="modified residue" description="Phosphoserine; alternate" evidence="2">
    <location>
        <position position="699"/>
    </location>
</feature>
<feature type="modified residue" description="Phosphoserine; alternate" evidence="2">
    <location>
        <position position="703"/>
    </location>
</feature>
<feature type="modified residue" description="N6-acetyllysine" evidence="2">
    <location>
        <position position="704"/>
    </location>
</feature>
<feature type="modified residue" description="Phosphothreonine; by MAPK1, MAPK3 and MAPK8" evidence="2">
    <location>
        <position position="738"/>
    </location>
</feature>
<feature type="glycosylation site" description="O-linked (GlcNAc) serine" evidence="1">
    <location>
        <position position="493"/>
    </location>
</feature>
<feature type="glycosylation site" description="O-linked (GlcNAc) serine; alternate" evidence="1">
    <location>
        <position position="613"/>
    </location>
</feature>
<feature type="glycosylation site" description="O-linked (GlcNAc) threonine; alternate" evidence="1">
    <location>
        <position position="641"/>
    </location>
</feature>
<feature type="glycosylation site" description="O-linked (GlcNAc) serine; alternate" evidence="1">
    <location>
        <position position="642"/>
    </location>
</feature>
<feature type="glycosylation site" description="O-linked (GlcNAc) serine; alternate" evidence="1">
    <location>
        <position position="699"/>
    </location>
</feature>
<feature type="glycosylation site" description="O-linked (GlcNAc) serine; alternate" evidence="1">
    <location>
        <position position="703"/>
    </location>
</feature>
<feature type="cross-link" description="Glycyl lysine isopeptide (Lys-Gly) (interchain with G-Cter in SUMO); alternate" evidence="1">
    <location>
        <position position="16"/>
    </location>
</feature>
<feature type="cross-link" description="Glycyl lysine isopeptide (Lys-Gly) (interchain with G-Cter in SUMO2); alternate" evidence="2">
    <location>
        <position position="16"/>
    </location>
</feature>
<feature type="splice variant" id="VSP_007376" description="In isoform 2." evidence="12">
    <location>
        <begin position="56"/>
        <end position="372"/>
    </location>
</feature>
<feature type="sequence conflict" description="In Ref. 1; AAC16484." evidence="13" ref="1">
    <original>T</original>
    <variation>A</variation>
    <location>
        <position position="100"/>
    </location>
</feature>
<feature type="sequence conflict" description="In Ref. 1; AAC16484." evidence="13" ref="1">
    <location>
        <begin position="131"/>
        <end position="133"/>
    </location>
</feature>
<feature type="sequence conflict" description="In Ref. 3; AAC08527." evidence="13" ref="3">
    <original>R</original>
    <variation>E</variation>
    <location>
        <position position="220"/>
    </location>
</feature>
<feature type="sequence conflict" description="In Ref. 1; AAC16484." evidence="13" ref="1">
    <original>G</original>
    <variation>V</variation>
    <location>
        <position position="462"/>
    </location>
</feature>
<dbReference type="EMBL" id="AF062566">
    <property type="protein sequence ID" value="AAC16484.1"/>
    <property type="molecule type" value="mRNA"/>
</dbReference>
<dbReference type="EMBL" id="S79832">
    <property type="protein sequence ID" value="AAB35321.1"/>
    <property type="molecule type" value="mRNA"/>
</dbReference>
<dbReference type="EMBL" id="AF022363">
    <property type="protein sequence ID" value="AAC08527.1"/>
    <property type="molecule type" value="mRNA"/>
</dbReference>
<dbReference type="EMBL" id="X60136">
    <property type="protein sequence ID" value="CAA42721.1"/>
    <property type="molecule type" value="Genomic_DNA"/>
</dbReference>
<dbReference type="PIR" id="S30493">
    <property type="entry name" value="S30493"/>
</dbReference>
<dbReference type="RefSeq" id="NP_038700.2">
    <property type="nucleotide sequence ID" value="NM_013672.2"/>
</dbReference>
<dbReference type="SMR" id="O89090"/>
<dbReference type="BioGRID" id="203414">
    <property type="interactions" value="29"/>
</dbReference>
<dbReference type="CORUM" id="O89090"/>
<dbReference type="DIP" id="DIP-35276N"/>
<dbReference type="FunCoup" id="O89090">
    <property type="interactions" value="3735"/>
</dbReference>
<dbReference type="IntAct" id="O89090">
    <property type="interactions" value="11"/>
</dbReference>
<dbReference type="MINT" id="O89090"/>
<dbReference type="STRING" id="10090.ENSMUSP00000001326"/>
<dbReference type="GlyCosmos" id="O89090">
    <property type="glycosylation" value="6 sites, No reported glycans"/>
</dbReference>
<dbReference type="GlyGen" id="O89090">
    <property type="glycosylation" value="7 sites, 1 O-linked glycan (6 sites)"/>
</dbReference>
<dbReference type="iPTMnet" id="O89090"/>
<dbReference type="PhosphoSitePlus" id="O89090"/>
<dbReference type="jPOST" id="O89090"/>
<dbReference type="PaxDb" id="10090-ENSMUSP00000001326"/>
<dbReference type="PeptideAtlas" id="O89090"/>
<dbReference type="ProteomicsDB" id="261485">
    <molecule id="O89090-1"/>
</dbReference>
<dbReference type="ProteomicsDB" id="261486">
    <molecule id="O89090-2"/>
</dbReference>
<dbReference type="Pumba" id="O89090"/>
<dbReference type="Antibodypedia" id="892">
    <property type="antibodies" value="1092 antibodies from 47 providers"/>
</dbReference>
<dbReference type="DNASU" id="20683"/>
<dbReference type="Ensembl" id="ENSMUST00000163709.8">
    <molecule id="O89090-2"/>
    <property type="protein sequence ID" value="ENSMUSP00000130747.2"/>
    <property type="gene ID" value="ENSMUSG00000001280.14"/>
</dbReference>
<dbReference type="GeneID" id="20683"/>
<dbReference type="KEGG" id="mmu:20683"/>
<dbReference type="UCSC" id="uc012aab.1">
    <molecule id="O89090-2"/>
    <property type="organism name" value="mouse"/>
</dbReference>
<dbReference type="AGR" id="MGI:98372"/>
<dbReference type="CTD" id="6667"/>
<dbReference type="MGI" id="MGI:98372">
    <property type="gene designation" value="Sp1"/>
</dbReference>
<dbReference type="VEuPathDB" id="HostDB:ENSMUSG00000001280"/>
<dbReference type="eggNOG" id="KOG1721">
    <property type="taxonomic scope" value="Eukaryota"/>
</dbReference>
<dbReference type="GeneTree" id="ENSGT00940000157804"/>
<dbReference type="HOGENOM" id="CLU_019688_1_0_1"/>
<dbReference type="InParanoid" id="O89090"/>
<dbReference type="OrthoDB" id="6365676at2759"/>
<dbReference type="Reactome" id="R-MMU-2173796">
    <property type="pathway name" value="SMAD2/SMAD3:SMAD4 heterotrimer regulates transcription"/>
</dbReference>
<dbReference type="Reactome" id="R-MMU-6807505">
    <property type="pathway name" value="RNA polymerase II transcribes snRNA genes"/>
</dbReference>
<dbReference type="Reactome" id="R-MMU-9018519">
    <property type="pathway name" value="Estrogen-dependent gene expression"/>
</dbReference>
<dbReference type="Reactome" id="R-MMU-9762293">
    <property type="pathway name" value="Regulation of CDH11 gene transcription"/>
</dbReference>
<dbReference type="BioGRID-ORCS" id="20683">
    <property type="hits" value="24 hits in 84 CRISPR screens"/>
</dbReference>
<dbReference type="ChiTaRS" id="Sp1">
    <property type="organism name" value="mouse"/>
</dbReference>
<dbReference type="PRO" id="PR:O89090"/>
<dbReference type="Proteomes" id="UP000000589">
    <property type="component" value="Chromosome 15"/>
</dbReference>
<dbReference type="RNAct" id="O89090">
    <property type="molecule type" value="protein"/>
</dbReference>
<dbReference type="Bgee" id="ENSMUSG00000001280">
    <property type="expression patterns" value="Expressed in rostral migratory stream and 271 other cell types or tissues"/>
</dbReference>
<dbReference type="ExpressionAtlas" id="O89090">
    <property type="expression patterns" value="baseline and differential"/>
</dbReference>
<dbReference type="GO" id="GO:0000785">
    <property type="term" value="C:chromatin"/>
    <property type="evidence" value="ECO:0000314"/>
    <property type="project" value="BHF-UCL"/>
</dbReference>
<dbReference type="GO" id="GO:0005737">
    <property type="term" value="C:cytoplasm"/>
    <property type="evidence" value="ECO:0007669"/>
    <property type="project" value="UniProtKB-SubCell"/>
</dbReference>
<dbReference type="GO" id="GO:0005634">
    <property type="term" value="C:nucleus"/>
    <property type="evidence" value="ECO:0000314"/>
    <property type="project" value="UniProtKB"/>
</dbReference>
<dbReference type="GO" id="GO:0032991">
    <property type="term" value="C:protein-containing complex"/>
    <property type="evidence" value="ECO:0000250"/>
    <property type="project" value="MGI"/>
</dbReference>
<dbReference type="GO" id="GO:0043425">
    <property type="term" value="F:bHLH transcription factor binding"/>
    <property type="evidence" value="ECO:0000353"/>
    <property type="project" value="BHF-UCL"/>
</dbReference>
<dbReference type="GO" id="GO:0000987">
    <property type="term" value="F:cis-regulatory region sequence-specific DNA binding"/>
    <property type="evidence" value="ECO:0000314"/>
    <property type="project" value="MGI"/>
</dbReference>
<dbReference type="GO" id="GO:0003677">
    <property type="term" value="F:DNA binding"/>
    <property type="evidence" value="ECO:0000314"/>
    <property type="project" value="MGI"/>
</dbReference>
<dbReference type="GO" id="GO:0001228">
    <property type="term" value="F:DNA-binding transcription activator activity, RNA polymerase II-specific"/>
    <property type="evidence" value="ECO:0000314"/>
    <property type="project" value="MGI"/>
</dbReference>
<dbReference type="GO" id="GO:0003700">
    <property type="term" value="F:DNA-binding transcription factor activity"/>
    <property type="evidence" value="ECO:0000314"/>
    <property type="project" value="MGI"/>
</dbReference>
<dbReference type="GO" id="GO:0000981">
    <property type="term" value="F:DNA-binding transcription factor activity, RNA polymerase II-specific"/>
    <property type="evidence" value="ECO:0000314"/>
    <property type="project" value="MGI"/>
</dbReference>
<dbReference type="GO" id="GO:0003690">
    <property type="term" value="F:double-stranded DNA binding"/>
    <property type="evidence" value="ECO:0000314"/>
    <property type="project" value="MGI"/>
</dbReference>
<dbReference type="GO" id="GO:0000978">
    <property type="term" value="F:RNA polymerase II cis-regulatory region sequence-specific DNA binding"/>
    <property type="evidence" value="ECO:0000314"/>
    <property type="project" value="UniProtKB"/>
</dbReference>
<dbReference type="GO" id="GO:0061629">
    <property type="term" value="F:RNA polymerase II-specific DNA-binding transcription factor binding"/>
    <property type="evidence" value="ECO:0000353"/>
    <property type="project" value="BHF-UCL"/>
</dbReference>
<dbReference type="GO" id="GO:0043565">
    <property type="term" value="F:sequence-specific DNA binding"/>
    <property type="evidence" value="ECO:0000314"/>
    <property type="project" value="MGI"/>
</dbReference>
<dbReference type="GO" id="GO:0008270">
    <property type="term" value="F:zinc ion binding"/>
    <property type="evidence" value="ECO:0007669"/>
    <property type="project" value="UniProtKB-KW"/>
</dbReference>
<dbReference type="GO" id="GO:0060216">
    <property type="term" value="P:definitive hemopoiesis"/>
    <property type="evidence" value="ECO:0000316"/>
    <property type="project" value="MGI"/>
</dbReference>
<dbReference type="GO" id="GO:0048596">
    <property type="term" value="P:embryonic camera-type eye morphogenesis"/>
    <property type="evidence" value="ECO:0000316"/>
    <property type="project" value="MGI"/>
</dbReference>
<dbReference type="GO" id="GO:0001892">
    <property type="term" value="P:embryonic placenta development"/>
    <property type="evidence" value="ECO:0000316"/>
    <property type="project" value="MGI"/>
</dbReference>
<dbReference type="GO" id="GO:0060136">
    <property type="term" value="P:embryonic process involved in female pregnancy"/>
    <property type="evidence" value="ECO:0000316"/>
    <property type="project" value="MGI"/>
</dbReference>
<dbReference type="GO" id="GO:0048706">
    <property type="term" value="P:embryonic skeletal system development"/>
    <property type="evidence" value="ECO:0000316"/>
    <property type="project" value="MGI"/>
</dbReference>
<dbReference type="GO" id="GO:0043353">
    <property type="term" value="P:enucleate erythrocyte differentiation"/>
    <property type="evidence" value="ECO:0000316"/>
    <property type="project" value="MGI"/>
</dbReference>
<dbReference type="GO" id="GO:0010467">
    <property type="term" value="P:gene expression"/>
    <property type="evidence" value="ECO:0000250"/>
    <property type="project" value="MGI"/>
</dbReference>
<dbReference type="GO" id="GO:0001701">
    <property type="term" value="P:in utero embryonic development"/>
    <property type="evidence" value="ECO:0000316"/>
    <property type="project" value="MGI"/>
</dbReference>
<dbReference type="GO" id="GO:0001889">
    <property type="term" value="P:liver development"/>
    <property type="evidence" value="ECO:0000316"/>
    <property type="project" value="MGI"/>
</dbReference>
<dbReference type="GO" id="GO:0030324">
    <property type="term" value="P:lung development"/>
    <property type="evidence" value="ECO:0000316"/>
    <property type="project" value="MGI"/>
</dbReference>
<dbReference type="GO" id="GO:0030219">
    <property type="term" value="P:megakaryocyte differentiation"/>
    <property type="evidence" value="ECO:0000316"/>
    <property type="project" value="MGI"/>
</dbReference>
<dbReference type="GO" id="GO:0042789">
    <property type="term" value="P:mRNA transcription by RNA polymerase II"/>
    <property type="evidence" value="ECO:0000314"/>
    <property type="project" value="MGI"/>
</dbReference>
<dbReference type="GO" id="GO:0002318">
    <property type="term" value="P:myeloid progenitor cell differentiation"/>
    <property type="evidence" value="ECO:0000316"/>
    <property type="project" value="MGI"/>
</dbReference>
<dbReference type="GO" id="GO:0001503">
    <property type="term" value="P:ossification"/>
    <property type="evidence" value="ECO:0000316"/>
    <property type="project" value="MGI"/>
</dbReference>
<dbReference type="GO" id="GO:0045893">
    <property type="term" value="P:positive regulation of DNA-templated transcription"/>
    <property type="evidence" value="ECO:0000314"/>
    <property type="project" value="UniProtKB"/>
</dbReference>
<dbReference type="GO" id="GO:0045944">
    <property type="term" value="P:positive regulation of transcription by RNA polymerase II"/>
    <property type="evidence" value="ECO:0000314"/>
    <property type="project" value="ARUK-UCL"/>
</dbReference>
<dbReference type="GO" id="GO:0006355">
    <property type="term" value="P:regulation of DNA-templated transcription"/>
    <property type="evidence" value="ECO:0000315"/>
    <property type="project" value="UniProtKB"/>
</dbReference>
<dbReference type="GO" id="GO:0033194">
    <property type="term" value="P:response to hydroperoxide"/>
    <property type="evidence" value="ECO:0000314"/>
    <property type="project" value="UniProtKB"/>
</dbReference>
<dbReference type="GO" id="GO:0048511">
    <property type="term" value="P:rhythmic process"/>
    <property type="evidence" value="ECO:0007669"/>
    <property type="project" value="UniProtKB-KW"/>
</dbReference>
<dbReference type="GO" id="GO:0001829">
    <property type="term" value="P:trophectodermal cell differentiation"/>
    <property type="evidence" value="ECO:0000316"/>
    <property type="project" value="MGI"/>
</dbReference>
<dbReference type="CDD" id="cd22539">
    <property type="entry name" value="SP1_N"/>
    <property type="match status" value="1"/>
</dbReference>
<dbReference type="FunFam" id="3.30.160.60:FF:000014">
    <property type="entry name" value="Transcription factor Sp3"/>
    <property type="match status" value="1"/>
</dbReference>
<dbReference type="FunFam" id="3.30.160.60:FF:000026">
    <property type="entry name" value="Transcription factor Sp3"/>
    <property type="match status" value="1"/>
</dbReference>
<dbReference type="FunFam" id="3.30.160.60:FF:000061">
    <property type="entry name" value="Transcription factor Sp3"/>
    <property type="match status" value="1"/>
</dbReference>
<dbReference type="Gene3D" id="3.30.160.60">
    <property type="entry name" value="Classic Zinc Finger"/>
    <property type="match status" value="3"/>
</dbReference>
<dbReference type="InterPro" id="IPR036236">
    <property type="entry name" value="Znf_C2H2_sf"/>
</dbReference>
<dbReference type="InterPro" id="IPR013087">
    <property type="entry name" value="Znf_C2H2_type"/>
</dbReference>
<dbReference type="PANTHER" id="PTHR23235">
    <property type="entry name" value="KRUEPPEL-LIKE TRANSCRIPTION FACTOR"/>
    <property type="match status" value="1"/>
</dbReference>
<dbReference type="PANTHER" id="PTHR23235:SF16">
    <property type="entry name" value="TRANSCRIPTION FACTOR SP1"/>
    <property type="match status" value="1"/>
</dbReference>
<dbReference type="Pfam" id="PF00096">
    <property type="entry name" value="zf-C2H2"/>
    <property type="match status" value="2"/>
</dbReference>
<dbReference type="SMART" id="SM00355">
    <property type="entry name" value="ZnF_C2H2"/>
    <property type="match status" value="3"/>
</dbReference>
<dbReference type="SUPFAM" id="SSF57667">
    <property type="entry name" value="beta-beta-alpha zinc fingers"/>
    <property type="match status" value="1"/>
</dbReference>
<dbReference type="PROSITE" id="PS00028">
    <property type="entry name" value="ZINC_FINGER_C2H2_1"/>
    <property type="match status" value="3"/>
</dbReference>
<dbReference type="PROSITE" id="PS50157">
    <property type="entry name" value="ZINC_FINGER_C2H2_2"/>
    <property type="match status" value="3"/>
</dbReference>
<evidence type="ECO:0000250" key="1"/>
<evidence type="ECO:0000250" key="2">
    <source>
        <dbReference type="UniProtKB" id="P08047"/>
    </source>
</evidence>
<evidence type="ECO:0000250" key="3">
    <source>
        <dbReference type="UniProtKB" id="Q01714"/>
    </source>
</evidence>
<evidence type="ECO:0000255" key="4">
    <source>
        <dbReference type="PROSITE-ProRule" id="PRU00042"/>
    </source>
</evidence>
<evidence type="ECO:0000256" key="5">
    <source>
        <dbReference type="SAM" id="MobiDB-lite"/>
    </source>
</evidence>
<evidence type="ECO:0000269" key="6">
    <source>
    </source>
</evidence>
<evidence type="ECO:0000269" key="7">
    <source>
    </source>
</evidence>
<evidence type="ECO:0000269" key="8">
    <source>
    </source>
</evidence>
<evidence type="ECO:0000269" key="9">
    <source>
    </source>
</evidence>
<evidence type="ECO:0000269" key="10">
    <source>
    </source>
</evidence>
<evidence type="ECO:0000303" key="11">
    <source>
    </source>
</evidence>
<evidence type="ECO:0000303" key="12">
    <source>
    </source>
</evidence>
<evidence type="ECO:0000305" key="13"/>
<evidence type="ECO:0007744" key="14">
    <source>
    </source>
</evidence>
<evidence type="ECO:0007744" key="15">
    <source>
    </source>
</evidence>
<sequence>MSDQDHSMDEVTAVVKIEKDVGGNNGGSGNGGGAAFSQTRSSSTGSSSSSGGGGGQESQPSPLALLAATCSRIESPNENSNNSQGPSQSGGTGELDLTATQLSQGANGWQIISSSSGATPTSKEQSGNSTNGSNGSESSKNRTVSGGQYVVAATPNLQNQQVLTGLPGVMPNIQYQVIPQFQTVDGQQLQFAATGAQVQQDGSGQIQIIPGANQQIIPNRGSGGNIIAAMPNLLQQAVPLQGLANNVLSGQTQYVTNVPVALNGNITLLPVNSVSAATLTPSSQAGTISSSGSQESSSQPVTSGTAISSASLVSSQASSSSFFTNANSYSTTTTTSNMGIMNFTSSGSSGTSSQGQTPQRVGGLQGSDSLNIQQNQTSGGSLQGSQQKEGEQSQQTQQQQILIQPQLVQGGQALQALQAAPLSGQTFTTQAISQETLQNLQLQAVQNSGPIIIRTPTVGPNGQVSWQTLQLQNLQVQNPQAQTITLAPMQGVSLGQTSSSNTTLTPIASAASIPAGTVTVNAAQLSSMPGLQTINLSALGTSGIQVHQLPGLPLAIANTPGDHGTQLGLHGSGGDGIHDETAGGEGENSSDLQPQAGRRTRREACTCPYCKDSEGRASGDPGKKKQHICHIQGCGKVYGKTSHLRAHLRWHTGERPFMCNWSYCGKRFTRSDELQRHKRTHTGEKKFACPECPKRFMRSDHLSKHIKTHQNKKGGPGVALSVGTLPLDSGAGSEGTATPSALITTNMVAMEAICPEGIARLANSGINVMQVTELQSINISGNGF</sequence>
<comment type="function">
    <text evidence="2 3 7 8">Transcription factor that can activate or repress transcription in response to physiological and pathological stimuli. Binds with high affinity to GC-rich motifs and regulates the expression of a large number of genes involved in a variety of processes such as cell growth, apoptosis, differentiation and immune responses. Highly regulated by post-translational modifications (phosphorylations, sumoylation, proteolytic cleavage, glycosylation and acetylation). Also binds the PDGFR-alpha G-box promoter. May have a role in modulating the cellular response to DNA damage. Implicated in chromatin remodeling. Plays a role in the recruitment of SMARCA4/BRG1 on the c-FOS promoter Plays an essential role in the regulation of FE65 gene expression (By similarity). Positively regulates the transcription of the core clock component BMAL1 (PubMed:24030830). Plays a role in protecting cells against oxidative stress following brain injury by regulating the expression of RNF112 (PubMed:27918959).</text>
</comment>
<comment type="subunit">
    <text evidence="2 3 6 8">Interacts with ATF7IP, ATF7IP2, BAHD1, POGZ, HCFC1, AATF and PHC2. Interacts with SV40 VP2/3 proteins. Interacts with SV40 major capsid protein VP1; this interaction leads to a cooperativity between the 2 proteins in DNA binding. Interacts with HLTF; the interaction may be required for basal transcriptional activity of HLTF. Interacts (deacetylated form) with EP300; the interaction enhances gene expression. Interacts with HDAC1 and JUN. Interacts with ELF1; the interaction is inhibited by glycosylation of SP1. Interaction with NFYA; the interaction is inhibited by glycosylation of SP1. Interacts with SMARCA4/BRG1. Interacts with ATF7IP and TBP. Interacts with MEIS2 isoform 4 and PBX1 isoform PBX1a. Interacts with EGR1 (By similarity). Interacts with RNF112 in an oxidative stress-regulated manner (PubMed:27918959). Interacts with ZBTB7A; ZBTB7A prevents the binding to GC-rich motifs in promoters and represses the transcriptional activity of SP1 (By similarity). Interacts with DDX3X; this interaction potentiates SP1-induced CDKN1A/WAF1/CIP1 transcription (By similarity). Interacts with MSX1; the interaction may inhibit MSX1 autoinactivation (PubMed:10215616). Interacts with MSX3 (PubMed:10215616).</text>
</comment>
<comment type="subunit">
    <text evidence="9 10">(Microbial infection) Interacts with murine minute virus NS1; this interaction allows high levels of viral P38 promoter transactivation by NS1.</text>
</comment>
<comment type="subcellular location">
    <subcellularLocation>
        <location evidence="8">Nucleus</location>
    </subcellularLocation>
    <subcellularLocation>
        <location evidence="1">Cytoplasm</location>
    </subcellularLocation>
    <text evidence="1">Nuclear location is governed by glycosylated/phosphorylated states. Insulin promotes nuclear location, while glucagon favors cytoplasmic location (By similarity).</text>
</comment>
<comment type="alternative products">
    <event type="alternative splicing"/>
    <isoform>
        <id>O89090-1</id>
        <name>1</name>
        <sequence type="displayed"/>
    </isoform>
    <isoform>
        <id>O89090-2</id>
        <name>2</name>
        <name>Sp1-S</name>
        <sequence type="described" ref="VSP_007376"/>
    </isoform>
</comment>
<comment type="induction">
    <text evidence="8">Up-regulated by traumatic brain injury and hydrogen peroxide (at protein level) (PubMed:27918959).</text>
</comment>
<comment type="domain">
    <text evidence="2">The 9aaTAD motif is a transactivation domain present in a large number of yeast and animal transcription factors.</text>
</comment>
<comment type="PTM">
    <text evidence="1">Phosphorylated on multiple serine and threonine residues. Phosphorylation is coupled to ubiquitination, sumoylation and proteolytic processing. Phosphorylation on Ser-61 enhances proteolytic cleavage. Phosphorylation on Ser-7 enhances ubiquitination and protein degradation. Hyperphosphorylation on Ser-103 in response to DNA damage has no effect on transcriptional activity. MAPK1/MAPK3-mediated phosphorylation on Thr-455 and Thr-738 enhances VEGF transcription but, represses FGF2-triggered PDGFR-alpha transcription. Also implicated in the repression of RECK by ERBB2. Hyperphosphorylated on Thr-280 and Thr-738 during mitosis by MAPK8 shielding SP1 from degradation by the ubiquitin-dependent pathway. Phosphorylated in the zinc-finger domain by calmodulin-activated PKCzeta. Phosphorylation on Ser-642 by PKCzeta is critical for TSA-activated LHR gene expression through release of its repressor, p107. Phosphorylation on Thr-669, Ser-671 and Thr-682 is stimulated by angiotensin II via the AT1 receptor inducing increased binding to the PDGF-D promoter. This phosphorylation is increased in injured artey wall. Ser-61 and Thr-682 can both be dephosphorylated by PP2A during cell-cycle interphase. Dephosphorylation on Ser-61 leads to increased chromatin association during interphase and increases the transcriptional activity. On insulin stimulation, sequentially glycosylated and phosphorylated on several C-terminal serine and threonine residues (By similarity).</text>
</comment>
<comment type="PTM">
    <text evidence="2">Acetylated. Acetylation/deacetylation events affect transcriptional activity. Deacetylation leads to an increase in the expression of the 12(s)-lipooxygenase gene through recruitment of p300 to the promoter. Deacetylated by HDAC6 which leads to increased expression of ENG and positive regulation of angiogenesis.</text>
</comment>
<comment type="PTM">
    <text evidence="1">Ubiquitinated. Ubiquitination occurs on the C-terminal proteolytically-cleaved peptide and is triggered by phosphorylation (By similarity).</text>
</comment>
<comment type="PTM">
    <text evidence="1">Sumoylated with SUMO1. Sumoylation modulates proteolytic cleavage of the N-terminal repressor domain. Sumoylation levels are attenuated during tumorigenesis. Phosphorylation mediates SP1 desumoylation (By similarity).</text>
</comment>
<comment type="PTM">
    <text evidence="1">Proteolytic cleavage in the N-terminal repressor domain is prevented by sumoylation. The C-terminal cleaved product is susceptible to degradation (By similarity).</text>
</comment>
<comment type="PTM">
    <text evidence="1">O-glycosylated; Contains 8 N-acetylglucosamine side chains. Levels are controlled by insulin and the SP1 phosphorylation states. Insulin-mediated O-glycosylation locates SP1 to the nucleus, where it is sequentially deglycosylated and phosphorylated. O-glycosylation affects transcriptional activity through disrupting the interaction with a number of transcription factors including ELF1 and NFYA. Inhibited by peroxisomome proliferator receptor gamma (PPARgamma) (By similarity).</text>
</comment>
<comment type="similarity">
    <text evidence="13">Belongs to the Sp1 C2H2-type zinc-finger protein family.</text>
</comment>